<keyword id="KW-0145">Chemotaxis</keyword>
<keyword id="KW-0963">Cytoplasm</keyword>
<keyword id="KW-0378">Hydrolase</keyword>
<keyword id="KW-1185">Reference proteome</keyword>
<comment type="function">
    <text evidence="1">May be involved in chemotaxis.</text>
</comment>
<comment type="catalytic activity">
    <reaction evidence="1">
        <text>[protein]-L-glutamate 5-O-methyl ester + H2O = L-glutamyl-[protein] + methanol + H(+)</text>
        <dbReference type="Rhea" id="RHEA:23236"/>
        <dbReference type="Rhea" id="RHEA-COMP:10208"/>
        <dbReference type="Rhea" id="RHEA-COMP:10311"/>
        <dbReference type="ChEBI" id="CHEBI:15377"/>
        <dbReference type="ChEBI" id="CHEBI:15378"/>
        <dbReference type="ChEBI" id="CHEBI:17790"/>
        <dbReference type="ChEBI" id="CHEBI:29973"/>
        <dbReference type="ChEBI" id="CHEBI:82795"/>
        <dbReference type="EC" id="3.1.1.61"/>
    </reaction>
</comment>
<comment type="catalytic activity">
    <reaction evidence="1">
        <text>L-glutaminyl-[protein] + H2O = L-glutamyl-[protein] + NH4(+)</text>
        <dbReference type="Rhea" id="RHEA:16441"/>
        <dbReference type="Rhea" id="RHEA-COMP:10207"/>
        <dbReference type="Rhea" id="RHEA-COMP:10208"/>
        <dbReference type="ChEBI" id="CHEBI:15377"/>
        <dbReference type="ChEBI" id="CHEBI:28938"/>
        <dbReference type="ChEBI" id="CHEBI:29973"/>
        <dbReference type="ChEBI" id="CHEBI:30011"/>
        <dbReference type="EC" id="3.5.1.44"/>
    </reaction>
</comment>
<comment type="subcellular location">
    <subcellularLocation>
        <location evidence="1">Cytoplasm</location>
    </subcellularLocation>
</comment>
<comment type="similarity">
    <text evidence="3">Belongs to the CheB family.</text>
</comment>
<comment type="sequence caution" evidence="3">
    <conflict type="erroneous initiation">
        <sequence resource="EMBL-CDS" id="AAN48943"/>
    </conflict>
    <text>Truncated N-terminus.</text>
</comment>
<proteinExistence type="inferred from homology"/>
<reference key="1">
    <citation type="journal article" date="2003" name="Nature">
        <title>Unique physiological and pathogenic features of Leptospira interrogans revealed by whole-genome sequencing.</title>
        <authorList>
            <person name="Ren S.-X."/>
            <person name="Fu G."/>
            <person name="Jiang X.-G."/>
            <person name="Zeng R."/>
            <person name="Miao Y.-G."/>
            <person name="Xu H."/>
            <person name="Zhang Y.-X."/>
            <person name="Xiong H."/>
            <person name="Lu G."/>
            <person name="Lu L.-F."/>
            <person name="Jiang H.-Q."/>
            <person name="Jia J."/>
            <person name="Tu Y.-F."/>
            <person name="Jiang J.-X."/>
            <person name="Gu W.-Y."/>
            <person name="Zhang Y.-Q."/>
            <person name="Cai Z."/>
            <person name="Sheng H.-H."/>
            <person name="Yin H.-F."/>
            <person name="Zhang Y."/>
            <person name="Zhu G.-F."/>
            <person name="Wan M."/>
            <person name="Huang H.-L."/>
            <person name="Qian Z."/>
            <person name="Wang S.-Y."/>
            <person name="Ma W."/>
            <person name="Yao Z.-J."/>
            <person name="Shen Y."/>
            <person name="Qiang B.-Q."/>
            <person name="Xia Q.-C."/>
            <person name="Guo X.-K."/>
            <person name="Danchin A."/>
            <person name="Saint Girons I."/>
            <person name="Somerville R.L."/>
            <person name="Wen Y.-M."/>
            <person name="Shi M.-H."/>
            <person name="Chen Z."/>
            <person name="Xu J.-G."/>
            <person name="Zhao G.-P."/>
        </authorList>
    </citation>
    <scope>NUCLEOTIDE SEQUENCE [LARGE SCALE GENOMIC DNA]</scope>
    <source>
        <strain>56601</strain>
    </source>
</reference>
<accession>Q8F5D8</accession>
<organism>
    <name type="scientific">Leptospira interrogans serogroup Icterohaemorrhagiae serovar Lai (strain 56601)</name>
    <dbReference type="NCBI Taxonomy" id="189518"/>
    <lineage>
        <taxon>Bacteria</taxon>
        <taxon>Pseudomonadati</taxon>
        <taxon>Spirochaetota</taxon>
        <taxon>Spirochaetia</taxon>
        <taxon>Leptospirales</taxon>
        <taxon>Leptospiraceae</taxon>
        <taxon>Leptospira</taxon>
    </lineage>
</organism>
<gene>
    <name type="primary">cheB2</name>
    <name type="ordered locus">LA_1744</name>
</gene>
<dbReference type="EC" id="3.1.1.61" evidence="1"/>
<dbReference type="EC" id="3.5.1.44" evidence="1"/>
<dbReference type="EMBL" id="AE010300">
    <property type="protein sequence ID" value="AAN48943.2"/>
    <property type="status" value="ALT_INIT"/>
    <property type="molecule type" value="Genomic_DNA"/>
</dbReference>
<dbReference type="RefSeq" id="NP_711925.2">
    <property type="nucleotide sequence ID" value="NC_004342.2"/>
</dbReference>
<dbReference type="RefSeq" id="WP_001105137.1">
    <property type="nucleotide sequence ID" value="NC_004342.2"/>
</dbReference>
<dbReference type="SMR" id="Q8F5D8"/>
<dbReference type="STRING" id="189518.LA_1744"/>
<dbReference type="PaxDb" id="189518-LA_1744"/>
<dbReference type="EnsemblBacteria" id="AAN48943">
    <property type="protein sequence ID" value="AAN48943"/>
    <property type="gene ID" value="LA_1744"/>
</dbReference>
<dbReference type="KEGG" id="lil:LA_1744"/>
<dbReference type="PATRIC" id="fig|189518.3.peg.1735"/>
<dbReference type="HOGENOM" id="CLU_000445_51_2_12"/>
<dbReference type="InParanoid" id="Q8F5D8"/>
<dbReference type="OrthoDB" id="9793421at2"/>
<dbReference type="Proteomes" id="UP000001408">
    <property type="component" value="Chromosome I"/>
</dbReference>
<dbReference type="GO" id="GO:0005737">
    <property type="term" value="C:cytoplasm"/>
    <property type="evidence" value="ECO:0007669"/>
    <property type="project" value="UniProtKB-SubCell"/>
</dbReference>
<dbReference type="GO" id="GO:0000156">
    <property type="term" value="F:phosphorelay response regulator activity"/>
    <property type="evidence" value="ECO:0007669"/>
    <property type="project" value="InterPro"/>
</dbReference>
<dbReference type="GO" id="GO:0008984">
    <property type="term" value="F:protein-glutamate methylesterase activity"/>
    <property type="evidence" value="ECO:0007669"/>
    <property type="project" value="UniProtKB-EC"/>
</dbReference>
<dbReference type="GO" id="GO:0050568">
    <property type="term" value="F:protein-glutamine glutaminase activity"/>
    <property type="evidence" value="ECO:0007669"/>
    <property type="project" value="UniProtKB-EC"/>
</dbReference>
<dbReference type="GO" id="GO:0006935">
    <property type="term" value="P:chemotaxis"/>
    <property type="evidence" value="ECO:0007669"/>
    <property type="project" value="UniProtKB-KW"/>
</dbReference>
<dbReference type="CDD" id="cd16433">
    <property type="entry name" value="CheB"/>
    <property type="match status" value="1"/>
</dbReference>
<dbReference type="Gene3D" id="3.40.50.180">
    <property type="entry name" value="Methylesterase CheB, C-terminal domain"/>
    <property type="match status" value="1"/>
</dbReference>
<dbReference type="InterPro" id="IPR035909">
    <property type="entry name" value="CheB_C"/>
</dbReference>
<dbReference type="InterPro" id="IPR000673">
    <property type="entry name" value="Sig_transdc_resp-reg_Me-estase"/>
</dbReference>
<dbReference type="PANTHER" id="PTHR42872">
    <property type="entry name" value="PROTEIN-GLUTAMATE METHYLESTERASE/PROTEIN-GLUTAMINE GLUTAMINASE"/>
    <property type="match status" value="1"/>
</dbReference>
<dbReference type="PANTHER" id="PTHR42872:SF3">
    <property type="entry name" value="PROTEIN-GLUTAMATE METHYLESTERASE_PROTEIN-GLUTAMINE GLUTAMINASE 1"/>
    <property type="match status" value="1"/>
</dbReference>
<dbReference type="Pfam" id="PF01339">
    <property type="entry name" value="CheB_methylest"/>
    <property type="match status" value="1"/>
</dbReference>
<dbReference type="SUPFAM" id="SSF52738">
    <property type="entry name" value="Methylesterase CheB, C-terminal domain"/>
    <property type="match status" value="1"/>
</dbReference>
<dbReference type="PROSITE" id="PS50122">
    <property type="entry name" value="CHEB"/>
    <property type="match status" value="1"/>
</dbReference>
<evidence type="ECO:0000250" key="1"/>
<evidence type="ECO:0000255" key="2">
    <source>
        <dbReference type="PROSITE-ProRule" id="PRU00050"/>
    </source>
</evidence>
<evidence type="ECO:0000305" key="3"/>
<feature type="chain" id="PRO_0000158003" description="Putative protein-glutamate methylesterase/protein-glutamine glutaminase">
    <location>
        <begin position="1"/>
        <end position="193"/>
    </location>
</feature>
<feature type="domain" description="CheB-type methylesterase" evidence="2">
    <location>
        <begin position="1"/>
        <end position="189"/>
    </location>
</feature>
<feature type="active site" evidence="2">
    <location>
        <position position="11"/>
    </location>
</feature>
<feature type="active site" evidence="2">
    <location>
        <position position="38"/>
    </location>
</feature>
<feature type="active site" evidence="2">
    <location>
        <position position="131"/>
    </location>
</feature>
<protein>
    <recommendedName>
        <fullName evidence="3">Putative protein-glutamate methylesterase/protein-glutamine glutaminase</fullName>
        <ecNumber evidence="1">3.1.1.61</ecNumber>
        <ecNumber evidence="1">3.5.1.44</ecNumber>
    </recommendedName>
</protein>
<name>CHEB2_LEPIN</name>
<sequence length="193" mass="21292">MNYEAIVIGVSAGGINAMKTILPTLPTQFGIPIVIVQHIGARSDGEWFRILEKLCNIKIKEAEEKEEIKSGMVYVAPPNYHLLIEKDKTFSFSIGERVNFSRPSIDVLFETASEVYEDKLIGVILTGANSDGAQGLKKIKENGGLAVVQDPLTAEIALMPRSAIEATSVDYVLSLEKIAELFIRLDQNNLEQR</sequence>